<comment type="function">
    <text evidence="1">Removes the formyl group from the N-terminal Met of newly synthesized proteins. Requires at least a dipeptide for an efficient rate of reaction. N-terminal L-methionine is a prerequisite for activity but the enzyme has broad specificity at other positions.</text>
</comment>
<comment type="catalytic activity">
    <reaction evidence="1">
        <text>N-terminal N-formyl-L-methionyl-[peptide] + H2O = N-terminal L-methionyl-[peptide] + formate</text>
        <dbReference type="Rhea" id="RHEA:24420"/>
        <dbReference type="Rhea" id="RHEA-COMP:10639"/>
        <dbReference type="Rhea" id="RHEA-COMP:10640"/>
        <dbReference type="ChEBI" id="CHEBI:15377"/>
        <dbReference type="ChEBI" id="CHEBI:15740"/>
        <dbReference type="ChEBI" id="CHEBI:49298"/>
        <dbReference type="ChEBI" id="CHEBI:64731"/>
        <dbReference type="EC" id="3.5.1.88"/>
    </reaction>
</comment>
<comment type="cofactor">
    <cofactor evidence="1">
        <name>Fe(2+)</name>
        <dbReference type="ChEBI" id="CHEBI:29033"/>
    </cofactor>
    <text evidence="1">Binds 1 Fe(2+) ion.</text>
</comment>
<comment type="similarity">
    <text evidence="1">Belongs to the polypeptide deformylase family.</text>
</comment>
<gene>
    <name evidence="1" type="primary">def</name>
    <name type="ordered locus">tlr1676</name>
</gene>
<evidence type="ECO:0000255" key="1">
    <source>
        <dbReference type="HAMAP-Rule" id="MF_00163"/>
    </source>
</evidence>
<proteinExistence type="inferred from homology"/>
<protein>
    <recommendedName>
        <fullName evidence="1">Peptide deformylase</fullName>
        <shortName evidence="1">PDF</shortName>
        <ecNumber evidence="1">3.5.1.88</ecNumber>
    </recommendedName>
    <alternativeName>
        <fullName evidence="1">Polypeptide deformylase</fullName>
    </alternativeName>
</protein>
<reference key="1">
    <citation type="journal article" date="2002" name="DNA Res.">
        <title>Complete genome structure of the thermophilic cyanobacterium Thermosynechococcus elongatus BP-1.</title>
        <authorList>
            <person name="Nakamura Y."/>
            <person name="Kaneko T."/>
            <person name="Sato S."/>
            <person name="Ikeuchi M."/>
            <person name="Katoh H."/>
            <person name="Sasamoto S."/>
            <person name="Watanabe A."/>
            <person name="Iriguchi M."/>
            <person name="Kawashima K."/>
            <person name="Kimura T."/>
            <person name="Kishida Y."/>
            <person name="Kiyokawa C."/>
            <person name="Kohara M."/>
            <person name="Matsumoto M."/>
            <person name="Matsuno A."/>
            <person name="Nakazaki N."/>
            <person name="Shimpo S."/>
            <person name="Sugimoto M."/>
            <person name="Takeuchi C."/>
            <person name="Yamada M."/>
            <person name="Tabata S."/>
        </authorList>
    </citation>
    <scope>NUCLEOTIDE SEQUENCE [LARGE SCALE GENOMIC DNA]</scope>
    <source>
        <strain>NIES-2133 / IAM M-273 / BP-1</strain>
    </source>
</reference>
<sequence length="188" mass="20919">MAASLAVEKKKLKNPPLQLHYLGDRVLRQPAKRVSKVDDSIRDIARKMLQTMYSADGIGLAAPQVGINKQILVIDIHPDDPEAEPLVMINPVIKDFSEELEVCQEGCLSIPGVYLEVRRPAMVEVSYKDEWGRPQVIMAGGLLARAIQHEIDHLTGVMFVDRVENQALLRHELKEHGFTASAVRPIAA</sequence>
<dbReference type="EC" id="3.5.1.88" evidence="1"/>
<dbReference type="EMBL" id="BA000039">
    <property type="protein sequence ID" value="BAC09228.1"/>
    <property type="molecule type" value="Genomic_DNA"/>
</dbReference>
<dbReference type="RefSeq" id="NP_682466.1">
    <property type="nucleotide sequence ID" value="NC_004113.1"/>
</dbReference>
<dbReference type="RefSeq" id="WP_011057513.1">
    <property type="nucleotide sequence ID" value="NC_004113.1"/>
</dbReference>
<dbReference type="SMR" id="Q8DIB4"/>
<dbReference type="STRING" id="197221.gene:10748278"/>
<dbReference type="EnsemblBacteria" id="BAC09228">
    <property type="protein sequence ID" value="BAC09228"/>
    <property type="gene ID" value="BAC09228"/>
</dbReference>
<dbReference type="KEGG" id="tel:tlr1676"/>
<dbReference type="PATRIC" id="fig|197221.4.peg.1757"/>
<dbReference type="eggNOG" id="COG0242">
    <property type="taxonomic scope" value="Bacteria"/>
</dbReference>
<dbReference type="Proteomes" id="UP000000440">
    <property type="component" value="Chromosome"/>
</dbReference>
<dbReference type="GO" id="GO:0046872">
    <property type="term" value="F:metal ion binding"/>
    <property type="evidence" value="ECO:0007669"/>
    <property type="project" value="UniProtKB-KW"/>
</dbReference>
<dbReference type="GO" id="GO:0042586">
    <property type="term" value="F:peptide deformylase activity"/>
    <property type="evidence" value="ECO:0007669"/>
    <property type="project" value="UniProtKB-UniRule"/>
</dbReference>
<dbReference type="GO" id="GO:0043686">
    <property type="term" value="P:co-translational protein modification"/>
    <property type="evidence" value="ECO:0007669"/>
    <property type="project" value="TreeGrafter"/>
</dbReference>
<dbReference type="GO" id="GO:0006412">
    <property type="term" value="P:translation"/>
    <property type="evidence" value="ECO:0007669"/>
    <property type="project" value="UniProtKB-UniRule"/>
</dbReference>
<dbReference type="CDD" id="cd00487">
    <property type="entry name" value="Pep_deformylase"/>
    <property type="match status" value="1"/>
</dbReference>
<dbReference type="FunFam" id="3.90.45.10:FF:000005">
    <property type="entry name" value="Peptide deformylase"/>
    <property type="match status" value="1"/>
</dbReference>
<dbReference type="Gene3D" id="3.90.45.10">
    <property type="entry name" value="Peptide deformylase"/>
    <property type="match status" value="1"/>
</dbReference>
<dbReference type="HAMAP" id="MF_00163">
    <property type="entry name" value="Pep_deformylase"/>
    <property type="match status" value="1"/>
</dbReference>
<dbReference type="InterPro" id="IPR023635">
    <property type="entry name" value="Peptide_deformylase"/>
</dbReference>
<dbReference type="InterPro" id="IPR036821">
    <property type="entry name" value="Peptide_deformylase_sf"/>
</dbReference>
<dbReference type="NCBIfam" id="TIGR00079">
    <property type="entry name" value="pept_deformyl"/>
    <property type="match status" value="1"/>
</dbReference>
<dbReference type="NCBIfam" id="NF001159">
    <property type="entry name" value="PRK00150.1-3"/>
    <property type="match status" value="1"/>
</dbReference>
<dbReference type="PANTHER" id="PTHR10458">
    <property type="entry name" value="PEPTIDE DEFORMYLASE"/>
    <property type="match status" value="1"/>
</dbReference>
<dbReference type="PANTHER" id="PTHR10458:SF22">
    <property type="entry name" value="PEPTIDE DEFORMYLASE"/>
    <property type="match status" value="1"/>
</dbReference>
<dbReference type="Pfam" id="PF01327">
    <property type="entry name" value="Pep_deformylase"/>
    <property type="match status" value="1"/>
</dbReference>
<dbReference type="PIRSF" id="PIRSF004749">
    <property type="entry name" value="Pep_def"/>
    <property type="match status" value="1"/>
</dbReference>
<dbReference type="PRINTS" id="PR01576">
    <property type="entry name" value="PDEFORMYLASE"/>
</dbReference>
<dbReference type="SUPFAM" id="SSF56420">
    <property type="entry name" value="Peptide deformylase"/>
    <property type="match status" value="1"/>
</dbReference>
<keyword id="KW-0378">Hydrolase</keyword>
<keyword id="KW-0408">Iron</keyword>
<keyword id="KW-0479">Metal-binding</keyword>
<keyword id="KW-0648">Protein biosynthesis</keyword>
<keyword id="KW-1185">Reference proteome</keyword>
<name>DEF_THEVB</name>
<organism>
    <name type="scientific">Thermosynechococcus vestitus (strain NIES-2133 / IAM M-273 / BP-1)</name>
    <dbReference type="NCBI Taxonomy" id="197221"/>
    <lineage>
        <taxon>Bacteria</taxon>
        <taxon>Bacillati</taxon>
        <taxon>Cyanobacteriota</taxon>
        <taxon>Cyanophyceae</taxon>
        <taxon>Acaryochloridales</taxon>
        <taxon>Thermosynechococcaceae</taxon>
        <taxon>Thermosynechococcus</taxon>
    </lineage>
</organism>
<feature type="chain" id="PRO_0000082863" description="Peptide deformylase">
    <location>
        <begin position="1"/>
        <end position="188"/>
    </location>
</feature>
<feature type="active site" evidence="1">
    <location>
        <position position="150"/>
    </location>
</feature>
<feature type="binding site" evidence="1">
    <location>
        <position position="107"/>
    </location>
    <ligand>
        <name>Fe cation</name>
        <dbReference type="ChEBI" id="CHEBI:24875"/>
    </ligand>
</feature>
<feature type="binding site" evidence="1">
    <location>
        <position position="149"/>
    </location>
    <ligand>
        <name>Fe cation</name>
        <dbReference type="ChEBI" id="CHEBI:24875"/>
    </ligand>
</feature>
<feature type="binding site" evidence="1">
    <location>
        <position position="153"/>
    </location>
    <ligand>
        <name>Fe cation</name>
        <dbReference type="ChEBI" id="CHEBI:24875"/>
    </ligand>
</feature>
<accession>Q8DIB4</accession>